<keyword id="KW-0002">3D-structure</keyword>
<keyword id="KW-0064">Aspartyl protease</keyword>
<keyword id="KW-1015">Disulfide bond</keyword>
<keyword id="KW-0378">Hydrolase</keyword>
<keyword id="KW-0472">Membrane</keyword>
<keyword id="KW-0645">Protease</keyword>
<keyword id="KW-1185">Reference proteome</keyword>
<keyword id="KW-0735">Signal-anchor</keyword>
<keyword id="KW-0812">Transmembrane</keyword>
<keyword id="KW-1133">Transmembrane helix</keyword>
<keyword id="KW-0926">Vacuole</keyword>
<keyword id="KW-0865">Zymogen</keyword>
<proteinExistence type="evidence at protein level"/>
<sequence>MNLTIKEEDFTNTFMKNEESFNTFRVTKVKRWNAKRLFKILFVTVFIVLAGGFSYYIFENFVFQKNRKINHIIKTSKYSTVGFNIENSYDRLMKTIKEHKLKNYIKESVKLFNKGLTKKSYLGSEFDNVELKDLANVLSFGEAKLGDNGQKFNFLFHTASSNVWVPSIKCTSESCESKNHYDSSKSKTYEKDDTPVKLTSKAGTISGIFSKDLVTIGKLSVPYKFIEMTEIVGFEPFYSESDVDGVFGLGWKDLSIGSIDPYIVELKTQNKIEQAVYSIYLPPENKNKGYLTIGGIEERFFDGPLNYEKLNHDLMWQVDLDVHFGNVSSKKANVILDSATSVITVPTEFFNQFVESASVFKVPFLSLYVTTCGNTKLPTLEYRSPNKVYTLEPKQYLEPLENIFSALCMLNIVPIDLEKNTFVLGDPFMRKYFTVYDYDNHTVGFALAKNL</sequence>
<accession>Q9Y006</accession>
<accession>A0A0L7K5R8</accession>
<gene>
    <name evidence="12" type="primary">PMIII</name>
    <name evidence="11" type="synonym">HAP</name>
    <name evidence="20" type="ORF">PFHG_00466</name>
</gene>
<comment type="function">
    <text evidence="7 12">During the asexual blood stage, catalyzes the cleavage of denatured host hemoglobin (Hb) or globins (PubMed:11782538). Digestion of host Hb is an essential step which provides the parasite with amino acids for protein synthesis, and regulates osmolarity (Probable).</text>
</comment>
<comment type="catalytic activity">
    <reaction evidence="7">
        <text>Hydrolysis of the bonds linking certain hydrophobic residues in hemoglobin or globin. Also cleaves small molecules substrates such as Ala-Leu-Glu-Arg-Thr-Phe-|-Phe(NO2)-Ser-Phe-Pro-Thr.</text>
        <dbReference type="EC" id="3.4.23.39"/>
    </reaction>
</comment>
<comment type="activity regulation">
    <text evidence="2 7">Dimerization causes loss of catalytic activity (By similarity). Inhibited by pepstatin A (PubMed:11782538).</text>
</comment>
<comment type="biophysicochemical properties">
    <phDependence>
        <text evidence="7">Optimum pH is 5.7.</text>
    </phDependence>
</comment>
<comment type="subunit">
    <text evidence="2 7 10">Probable homodimer; in the zymogen form (PubMed:32385863). Monomer; in the active form (PubMed:11782538, PubMed:32385863). Acidification disrupts homodimerization (PubMed:32385863). Component of the hemozoin formation complex (HFC) composed of falcipains FP2A and/or FP2B, plasmepsins PMII, PMIII/HAP and PMIV, heme detoxifying protein HDP and falcilysin FLN (By similarity). The HFC complex is involved in hemoglobin degradation and detoxification of heme in the food vacuole during the asexual blood stage (By similarity).</text>
</comment>
<comment type="subcellular location">
    <subcellularLocation>
        <location evidence="3">Membrane</location>
        <topology evidence="12">Single-pass type II membrane protein</topology>
    </subcellularLocation>
    <subcellularLocation>
        <location evidence="7">Vacuole lumen</location>
    </subcellularLocation>
    <text evidence="7">In trophozoites, localizes to the digestive (or food) vacuole, an acidic vacuole where host hemoglobin is digested.</text>
</comment>
<comment type="developmental stage">
    <text evidence="6 7 8">Expressed during the asexual blood stage; expression begins in trophozoites and continues in schizonts (at protein level).</text>
</comment>
<comment type="PTM">
    <text evidence="1 8 13">Proteolytically cleaved into the soluble active mature form by cysteine proteases in the digestive vacuole of trophozoites (PubMed:12850260). Proteolysis requires an acidic environment (By similarity). Transprocessing may serve as an alternate activation system (Probable).</text>
</comment>
<comment type="similarity">
    <text evidence="12">Belongs to the peptidase A1 family.</text>
</comment>
<comment type="caution">
    <text evidence="2 7">Unlike other plasmepsins, one of the two catalytic aspartates, Asp-157, is replaced with histidine; however, the protein is catalytic active (PubMed:11782538). Unlikely to act as a serine protease (By similarity). His-157 may stabilizes the catalysis and Asp-337 may act as both an acid and a base during catalysis (By similarity).</text>
</comment>
<comment type="caution">
    <text evidence="12">It is unclear if PMIII is glycosylated as other members of the same enzyme family, ie. PMI and PMII, are not.</text>
</comment>
<dbReference type="EC" id="3.4.23.39" evidence="7"/>
<dbReference type="EMBL" id="AY878730">
    <property type="protein sequence ID" value="AAW71454.1"/>
    <property type="molecule type" value="Genomic_DNA"/>
</dbReference>
<dbReference type="EMBL" id="AY878731">
    <property type="protein sequence ID" value="AAW71455.1"/>
    <property type="molecule type" value="Genomic_DNA"/>
</dbReference>
<dbReference type="EMBL" id="AY878732">
    <property type="protein sequence ID" value="AAW71456.1"/>
    <property type="molecule type" value="Genomic_DNA"/>
</dbReference>
<dbReference type="EMBL" id="AY878733">
    <property type="protein sequence ID" value="AAW71457.1"/>
    <property type="molecule type" value="Genomic_DNA"/>
</dbReference>
<dbReference type="EMBL" id="AY878734">
    <property type="protein sequence ID" value="AAW71458.1"/>
    <property type="molecule type" value="Genomic_DNA"/>
</dbReference>
<dbReference type="EMBL" id="AJ009990">
    <property type="protein sequence ID" value="CAB40630.1"/>
    <property type="molecule type" value="Genomic_DNA"/>
</dbReference>
<dbReference type="EMBL" id="CH671923">
    <property type="protein sequence ID" value="KOB58718.1"/>
    <property type="molecule type" value="Genomic_DNA"/>
</dbReference>
<dbReference type="PDB" id="3QVC">
    <property type="method" value="X-ray"/>
    <property type="resolution" value="2.10 A"/>
    <property type="chains" value="A=1-451"/>
</dbReference>
<dbReference type="PDB" id="3QVI">
    <property type="method" value="X-ray"/>
    <property type="resolution" value="2.50 A"/>
    <property type="chains" value="A/B/C/D=1-451"/>
</dbReference>
<dbReference type="PDB" id="6KUB">
    <property type="method" value="X-ray"/>
    <property type="resolution" value="2.00 A"/>
    <property type="chains" value="A=77-451"/>
</dbReference>
<dbReference type="PDB" id="6KUC">
    <property type="method" value="X-ray"/>
    <property type="resolution" value="2.50 A"/>
    <property type="chains" value="A=77-451"/>
</dbReference>
<dbReference type="PDB" id="6KUD">
    <property type="method" value="X-ray"/>
    <property type="resolution" value="2.90 A"/>
    <property type="chains" value="A=77-451"/>
</dbReference>
<dbReference type="PDBsum" id="3QVC"/>
<dbReference type="PDBsum" id="3QVI"/>
<dbReference type="PDBsum" id="6KUB"/>
<dbReference type="PDBsum" id="6KUC"/>
<dbReference type="PDBsum" id="6KUD"/>
<dbReference type="SMR" id="Q9Y006"/>
<dbReference type="BindingDB" id="Q9Y006"/>
<dbReference type="ChEMBL" id="CHEMBL6075"/>
<dbReference type="MEROPS" id="A01.043"/>
<dbReference type="EnsemblProtists" id="KOB58718">
    <property type="protein sequence ID" value="KOB58718"/>
    <property type="gene ID" value="PFHG_00466"/>
</dbReference>
<dbReference type="KEGG" id="pfh:PFHG_00466"/>
<dbReference type="VEuPathDB" id="PlasmoDB:PF3D7_1408100"/>
<dbReference type="VEuPathDB" id="PlasmoDB:Pf7G8-2_000483300"/>
<dbReference type="VEuPathDB" id="PlasmoDB:Pf7G8_140013500"/>
<dbReference type="VEuPathDB" id="PlasmoDB:PfCD01_140013800"/>
<dbReference type="VEuPathDB" id="PlasmoDB:PfDd2_140012700"/>
<dbReference type="VEuPathDB" id="PlasmoDB:PfGA01_140013800"/>
<dbReference type="VEuPathDB" id="PlasmoDB:PfGB4_140014300"/>
<dbReference type="VEuPathDB" id="PlasmoDB:PfGN01_140013400"/>
<dbReference type="VEuPathDB" id="PlasmoDB:PfHB3_140014000"/>
<dbReference type="VEuPathDB" id="PlasmoDB:PfIT_140014700"/>
<dbReference type="VEuPathDB" id="PlasmoDB:PfKE01_140013400"/>
<dbReference type="VEuPathDB" id="PlasmoDB:PfKH01_140013700"/>
<dbReference type="VEuPathDB" id="PlasmoDB:PfKH02_140014000"/>
<dbReference type="VEuPathDB" id="PlasmoDB:PfML01_140013600"/>
<dbReference type="VEuPathDB" id="PlasmoDB:PfNF135_140013600"/>
<dbReference type="VEuPathDB" id="PlasmoDB:PfNF166_140012300"/>
<dbReference type="VEuPathDB" id="PlasmoDB:PfNF54_140013100"/>
<dbReference type="VEuPathDB" id="PlasmoDB:PfSD01_140011600"/>
<dbReference type="VEuPathDB" id="PlasmoDB:PfSN01_140015500"/>
<dbReference type="VEuPathDB" id="PlasmoDB:PfTG01_140013500"/>
<dbReference type="OrthoDB" id="568at418107"/>
<dbReference type="BioCyc" id="MetaCyc:MONOMER-15377"/>
<dbReference type="EvolutionaryTrace" id="Q9Y006"/>
<dbReference type="Proteomes" id="UP000054289">
    <property type="component" value="Unassembled WGS sequence"/>
</dbReference>
<dbReference type="GO" id="GO:0020020">
    <property type="term" value="C:food vacuole"/>
    <property type="evidence" value="ECO:0000314"/>
    <property type="project" value="UniProtKB"/>
</dbReference>
<dbReference type="GO" id="GO:0016020">
    <property type="term" value="C:membrane"/>
    <property type="evidence" value="ECO:0007669"/>
    <property type="project" value="UniProtKB-SubCell"/>
</dbReference>
<dbReference type="GO" id="GO:0005775">
    <property type="term" value="C:vacuolar lumen"/>
    <property type="evidence" value="ECO:0007669"/>
    <property type="project" value="UniProtKB-SubCell"/>
</dbReference>
<dbReference type="GO" id="GO:0004190">
    <property type="term" value="F:aspartic-type endopeptidase activity"/>
    <property type="evidence" value="ECO:0000314"/>
    <property type="project" value="UniProtKB"/>
</dbReference>
<dbReference type="GO" id="GO:0044002">
    <property type="term" value="P:acquisition of nutrients from host"/>
    <property type="evidence" value="ECO:0000314"/>
    <property type="project" value="UniProtKB"/>
</dbReference>
<dbReference type="GO" id="GO:0006508">
    <property type="term" value="P:proteolysis"/>
    <property type="evidence" value="ECO:0007669"/>
    <property type="project" value="UniProtKB-KW"/>
</dbReference>
<dbReference type="CDD" id="cd05471">
    <property type="entry name" value="pepsin_like"/>
    <property type="match status" value="1"/>
</dbReference>
<dbReference type="FunFam" id="2.40.70.10:FF:000035">
    <property type="entry name" value="Plasmepsin-2"/>
    <property type="match status" value="1"/>
</dbReference>
<dbReference type="FunFam" id="2.40.70.10:FF:000038">
    <property type="entry name" value="Plasmepsin-2"/>
    <property type="match status" value="1"/>
</dbReference>
<dbReference type="Gene3D" id="2.40.70.10">
    <property type="entry name" value="Acid Proteases"/>
    <property type="match status" value="2"/>
</dbReference>
<dbReference type="InterPro" id="IPR001461">
    <property type="entry name" value="Aspartic_peptidase_A1"/>
</dbReference>
<dbReference type="InterPro" id="IPR034164">
    <property type="entry name" value="Pepsin-like_dom"/>
</dbReference>
<dbReference type="InterPro" id="IPR033121">
    <property type="entry name" value="PEPTIDASE_A1"/>
</dbReference>
<dbReference type="InterPro" id="IPR021109">
    <property type="entry name" value="Peptidase_aspartic_dom_sf"/>
</dbReference>
<dbReference type="PANTHER" id="PTHR47966">
    <property type="entry name" value="BETA-SITE APP-CLEAVING ENZYME, ISOFORM A-RELATED"/>
    <property type="match status" value="1"/>
</dbReference>
<dbReference type="PANTHER" id="PTHR47966:SF51">
    <property type="entry name" value="BETA-SITE APP-CLEAVING ENZYME, ISOFORM A-RELATED"/>
    <property type="match status" value="1"/>
</dbReference>
<dbReference type="Pfam" id="PF00026">
    <property type="entry name" value="Asp"/>
    <property type="match status" value="1"/>
</dbReference>
<dbReference type="PRINTS" id="PR00792">
    <property type="entry name" value="PEPSIN"/>
</dbReference>
<dbReference type="SUPFAM" id="SSF50630">
    <property type="entry name" value="Acid proteases"/>
    <property type="match status" value="1"/>
</dbReference>
<dbReference type="PROSITE" id="PS51767">
    <property type="entry name" value="PEPTIDASE_A1"/>
    <property type="match status" value="1"/>
</dbReference>
<evidence type="ECO:0000250" key="1">
    <source>
        <dbReference type="UniProtKB" id="P39898"/>
    </source>
</evidence>
<evidence type="ECO:0000250" key="2">
    <source>
        <dbReference type="UniProtKB" id="Q8IM15"/>
    </source>
</evidence>
<evidence type="ECO:0000255" key="3"/>
<evidence type="ECO:0000255" key="4">
    <source>
        <dbReference type="PROSITE-ProRule" id="PRU01103"/>
    </source>
</evidence>
<evidence type="ECO:0000255" key="5">
    <source>
        <dbReference type="PROSITE-ProRule" id="PRU10094"/>
    </source>
</evidence>
<evidence type="ECO:0000269" key="6">
    <source>
    </source>
</evidence>
<evidence type="ECO:0000269" key="7">
    <source>
    </source>
</evidence>
<evidence type="ECO:0000269" key="8">
    <source>
    </source>
</evidence>
<evidence type="ECO:0000269" key="9">
    <source>
    </source>
</evidence>
<evidence type="ECO:0000269" key="10">
    <source>
    </source>
</evidence>
<evidence type="ECO:0000303" key="11">
    <source>
    </source>
</evidence>
<evidence type="ECO:0000305" key="12"/>
<evidence type="ECO:0000305" key="13">
    <source>
    </source>
</evidence>
<evidence type="ECO:0000312" key="14">
    <source>
        <dbReference type="EMBL" id="AAW71454.1"/>
    </source>
</evidence>
<evidence type="ECO:0000312" key="15">
    <source>
        <dbReference type="EMBL" id="AAW71455.1"/>
    </source>
</evidence>
<evidence type="ECO:0000312" key="16">
    <source>
        <dbReference type="EMBL" id="AAW71456.1"/>
    </source>
</evidence>
<evidence type="ECO:0000312" key="17">
    <source>
        <dbReference type="EMBL" id="AAW71457.1"/>
    </source>
</evidence>
<evidence type="ECO:0000312" key="18">
    <source>
        <dbReference type="EMBL" id="AAW71458.1"/>
    </source>
</evidence>
<evidence type="ECO:0000312" key="19">
    <source>
        <dbReference type="EMBL" id="CAB40630.1"/>
    </source>
</evidence>
<evidence type="ECO:0000312" key="20">
    <source>
        <dbReference type="EMBL" id="KOB58718.1"/>
    </source>
</evidence>
<evidence type="ECO:0000312" key="21">
    <source>
        <dbReference type="Proteomes" id="UP000054289"/>
    </source>
</evidence>
<evidence type="ECO:0007744" key="22">
    <source>
        <dbReference type="PDB" id="3QVC"/>
    </source>
</evidence>
<evidence type="ECO:0007744" key="23">
    <source>
        <dbReference type="PDB" id="3QVI"/>
    </source>
</evidence>
<evidence type="ECO:0007744" key="24">
    <source>
        <dbReference type="PDB" id="6KUB"/>
    </source>
</evidence>
<evidence type="ECO:0007744" key="25">
    <source>
        <dbReference type="PDB" id="6KUC"/>
    </source>
</evidence>
<evidence type="ECO:0007744" key="26">
    <source>
        <dbReference type="PDB" id="6KUD"/>
    </source>
</evidence>
<evidence type="ECO:0007829" key="27">
    <source>
        <dbReference type="PDB" id="3QVI"/>
    </source>
</evidence>
<evidence type="ECO:0007829" key="28">
    <source>
        <dbReference type="PDB" id="6KUB"/>
    </source>
</evidence>
<feature type="propeptide" id="PRO_0000453380" evidence="8">
    <location>
        <begin position="1"/>
        <end position="123"/>
    </location>
</feature>
<feature type="chain" id="PRO_0000453381" description="Plasmepsin III">
    <location>
        <begin position="124"/>
        <end position="451"/>
    </location>
</feature>
<feature type="topological domain" description="Cytoplasmic" evidence="12">
    <location>
        <begin position="1"/>
        <end position="37"/>
    </location>
</feature>
<feature type="transmembrane region" description="Helical; Signal-anchor for type II membrane protein" evidence="3">
    <location>
        <begin position="38"/>
        <end position="58"/>
    </location>
</feature>
<feature type="topological domain" description="Lumenal" evidence="12">
    <location>
        <begin position="59"/>
        <end position="451"/>
    </location>
</feature>
<feature type="domain" description="Peptidase A1" evidence="4">
    <location>
        <begin position="139"/>
        <end position="446"/>
    </location>
</feature>
<feature type="active site" evidence="5">
    <location>
        <position position="337"/>
    </location>
</feature>
<feature type="disulfide bond" evidence="9 10 22 23 24 25 26">
    <location>
        <begin position="170"/>
        <end position="175"/>
    </location>
</feature>
<feature type="disulfide bond" evidence="9 10 22 23 24 25 26">
    <location>
        <begin position="372"/>
        <end position="408"/>
    </location>
</feature>
<feature type="sequence conflict" description="In Ref. 3; KOB58718." evidence="12" ref="3">
    <original>L</original>
    <variation>F</variation>
    <location>
        <position position="451"/>
    </location>
</feature>
<feature type="strand" evidence="28">
    <location>
        <begin position="77"/>
        <end position="86"/>
    </location>
</feature>
<feature type="helix" evidence="28">
    <location>
        <begin position="88"/>
        <end position="98"/>
    </location>
</feature>
<feature type="helix" evidence="28">
    <location>
        <begin position="102"/>
        <end position="113"/>
    </location>
</feature>
<feature type="helix" evidence="28">
    <location>
        <begin position="131"/>
        <end position="134"/>
    </location>
</feature>
<feature type="strand" evidence="28">
    <location>
        <begin position="137"/>
        <end position="145"/>
    </location>
</feature>
<feature type="turn" evidence="28">
    <location>
        <begin position="146"/>
        <end position="149"/>
    </location>
</feature>
<feature type="strand" evidence="28">
    <location>
        <begin position="150"/>
        <end position="160"/>
    </location>
</feature>
<feature type="strand" evidence="28">
    <location>
        <begin position="163"/>
        <end position="167"/>
    </location>
</feature>
<feature type="turn" evidence="28">
    <location>
        <begin position="174"/>
        <end position="177"/>
    </location>
</feature>
<feature type="helix" evidence="28">
    <location>
        <begin position="183"/>
        <end position="185"/>
    </location>
</feature>
<feature type="strand" evidence="28">
    <location>
        <begin position="190"/>
        <end position="199"/>
    </location>
</feature>
<feature type="strand" evidence="28">
    <location>
        <begin position="201"/>
        <end position="216"/>
    </location>
</feature>
<feature type="strand" evidence="28">
    <location>
        <begin position="219"/>
        <end position="233"/>
    </location>
</feature>
<feature type="helix" evidence="28">
    <location>
        <begin position="237"/>
        <end position="240"/>
    </location>
</feature>
<feature type="strand" evidence="28">
    <location>
        <begin position="245"/>
        <end position="248"/>
    </location>
</feature>
<feature type="strand" evidence="28">
    <location>
        <begin position="250"/>
        <end position="252"/>
    </location>
</feature>
<feature type="strand" evidence="28">
    <location>
        <begin position="254"/>
        <end position="257"/>
    </location>
</feature>
<feature type="helix" evidence="28">
    <location>
        <begin position="262"/>
        <end position="268"/>
    </location>
</feature>
<feature type="strand" evidence="28">
    <location>
        <begin position="271"/>
        <end position="280"/>
    </location>
</feature>
<feature type="strand" evidence="27">
    <location>
        <begin position="285"/>
        <end position="287"/>
    </location>
</feature>
<feature type="strand" evidence="28">
    <location>
        <begin position="288"/>
        <end position="295"/>
    </location>
</feature>
<feature type="helix" evidence="28">
    <location>
        <begin position="298"/>
        <end position="300"/>
    </location>
</feature>
<feature type="strand" evidence="28">
    <location>
        <begin position="301"/>
        <end position="309"/>
    </location>
</feature>
<feature type="strand" evidence="28">
    <location>
        <begin position="315"/>
        <end position="324"/>
    </location>
</feature>
<feature type="strand" evidence="28">
    <location>
        <begin position="327"/>
        <end position="336"/>
    </location>
</feature>
<feature type="strand" evidence="28">
    <location>
        <begin position="340"/>
        <end position="345"/>
    </location>
</feature>
<feature type="helix" evidence="28">
    <location>
        <begin position="347"/>
        <end position="354"/>
    </location>
</feature>
<feature type="turn" evidence="28">
    <location>
        <begin position="355"/>
        <end position="358"/>
    </location>
</feature>
<feature type="strand" evidence="28">
    <location>
        <begin position="368"/>
        <end position="371"/>
    </location>
</feature>
<feature type="strand" evidence="28">
    <location>
        <begin position="380"/>
        <end position="383"/>
    </location>
</feature>
<feature type="strand" evidence="28">
    <location>
        <begin position="388"/>
        <end position="391"/>
    </location>
</feature>
<feature type="helix" evidence="28">
    <location>
        <begin position="393"/>
        <end position="396"/>
    </location>
</feature>
<feature type="strand" evidence="28">
    <location>
        <begin position="397"/>
        <end position="399"/>
    </location>
</feature>
<feature type="turn" evidence="28">
    <location>
        <begin position="401"/>
        <end position="403"/>
    </location>
</feature>
<feature type="strand" evidence="28">
    <location>
        <begin position="407"/>
        <end position="410"/>
    </location>
</feature>
<feature type="strand" evidence="28">
    <location>
        <begin position="412"/>
        <end position="414"/>
    </location>
</feature>
<feature type="strand" evidence="28">
    <location>
        <begin position="421"/>
        <end position="424"/>
    </location>
</feature>
<feature type="helix" evidence="28">
    <location>
        <begin position="426"/>
        <end position="431"/>
    </location>
</feature>
<feature type="strand" evidence="28">
    <location>
        <begin position="432"/>
        <end position="437"/>
    </location>
</feature>
<feature type="turn" evidence="28">
    <location>
        <begin position="438"/>
        <end position="441"/>
    </location>
</feature>
<feature type="strand" evidence="28">
    <location>
        <begin position="442"/>
        <end position="448"/>
    </location>
</feature>
<organism evidence="21">
    <name type="scientific">Plasmodium falciparum (isolate HB3)</name>
    <dbReference type="NCBI Taxonomy" id="137071"/>
    <lineage>
        <taxon>Eukaryota</taxon>
        <taxon>Sar</taxon>
        <taxon>Alveolata</taxon>
        <taxon>Apicomplexa</taxon>
        <taxon>Aconoidasida</taxon>
        <taxon>Haemosporida</taxon>
        <taxon>Plasmodiidae</taxon>
        <taxon>Plasmodium</taxon>
        <taxon>Plasmodium (Laverania)</taxon>
    </lineage>
</organism>
<reference evidence="19" key="1">
    <citation type="journal article" date="1999" name="FEBS Lett.">
        <title>A distinct member of the aspartic proteinase gene family from the human malaria parasite Plasmodium falciparum.</title>
        <authorList>
            <person name="Berry C."/>
            <person name="Humphreys M.J."/>
            <person name="Matharu P."/>
            <person name="Granger R."/>
            <person name="Horrocks P."/>
            <person name="Moon R.P."/>
            <person name="Certa U."/>
            <person name="Ridley R.G."/>
            <person name="Bur D."/>
            <person name="Kay J."/>
        </authorList>
    </citation>
    <scope>NUCLEOTIDE SEQUENCE [GENOMIC DNA]</scope>
    <scope>DEVELOPMENTAL STAGE</scope>
</reference>
<reference evidence="14" key="2">
    <citation type="journal article" date="2006" name="Gene">
        <title>Variable SNP density in aspartyl-protease genes of the malaria parasite Plasmodium falciparum.</title>
        <authorList>
            <person name="Barry A.E."/>
            <person name="Leliwa-Sytek A."/>
            <person name="Man K."/>
            <person name="Kasper J.M."/>
            <person name="Hartl D.L."/>
            <person name="Day K.P."/>
        </authorList>
    </citation>
    <scope>NUCLEOTIDE SEQUENCE [GENOMIC DNA]</scope>
    <source>
        <strain evidence="15">7G8</strain>
        <strain evidence="16">D6</strain>
        <strain evidence="17">HB3</strain>
        <strain evidence="18">MUZ12</strain>
        <strain evidence="14">W2</strain>
    </source>
</reference>
<reference evidence="21" key="3">
    <citation type="submission" date="2006-03" db="EMBL/GenBank/DDBJ databases">
        <title>Annotation of Plasmodium falciparum HB3.</title>
        <authorList>
            <consortium name="The Broad Institute Genome Sequencing Platform"/>
            <person name="Volkman S.K."/>
            <person name="Neafsey D.E."/>
            <person name="Dash A.P."/>
            <person name="Chitnis C.E."/>
            <person name="Hartl D.L."/>
            <person name="Young S.K."/>
            <person name="Zeng Q."/>
            <person name="Koehrsen M."/>
            <person name="Alvarado L."/>
            <person name="Berlin A."/>
            <person name="Borenstein D."/>
            <person name="Chapman S.B."/>
            <person name="Chen Z."/>
            <person name="Engels R."/>
            <person name="Freedman E."/>
            <person name="Gellesch M."/>
            <person name="Goldberg J."/>
            <person name="Griggs A."/>
            <person name="Gujja S."/>
            <person name="Heilman E.R."/>
            <person name="Heiman D.I."/>
            <person name="Howarth C."/>
            <person name="Jen D."/>
            <person name="Larson L."/>
            <person name="Mehta T."/>
            <person name="Neiman D."/>
            <person name="Park D."/>
            <person name="Pearson M."/>
            <person name="Roberts A."/>
            <person name="Saif S."/>
            <person name="Shea T."/>
            <person name="Shenoy N."/>
            <person name="Sisk P."/>
            <person name="Stolte C."/>
            <person name="Sykes S."/>
            <person name="Walk T."/>
            <person name="White J."/>
            <person name="Yandava C."/>
            <person name="Haas B."/>
            <person name="Henn M.R."/>
            <person name="Nusbaum C."/>
            <person name="Birren B."/>
        </authorList>
    </citation>
    <scope>NUCLEOTIDE SEQUENCE [LARGE SCALE GENOMIC DNA]</scope>
    <source>
        <strain evidence="21">HB3</strain>
    </source>
</reference>
<reference evidence="12" key="4">
    <citation type="journal article" date="2002" name="Proc. Natl. Acad. Sci. U.S.A.">
        <title>Four plasmepsins are active in the Plasmodium falciparum food vacuole, including a protease with an active-site histidine.</title>
        <authorList>
            <person name="Banerjee R."/>
            <person name="Liu J."/>
            <person name="Beatty W."/>
            <person name="Pelosof L."/>
            <person name="Klemba M."/>
            <person name="Goldberg D.E."/>
        </authorList>
    </citation>
    <scope>FUNCTION</scope>
    <scope>CATALYTIC ACTIVITY</scope>
    <scope>ACTIVITY REGULATION</scope>
    <scope>BIOPHYSICOCHEMICAL PROPERTIES</scope>
    <scope>SUBUNIT</scope>
    <scope>SUBCELLULAR LOCATION</scope>
    <scope>DEVELOPMENTAL STAGE</scope>
</reference>
<reference evidence="12" key="5">
    <citation type="journal article" date="2003" name="Mol. Biochem. Parasitol.">
        <title>Food vacuole plasmepsins are processed at a conserved site by an acidic convertase activity in Plasmodium falciparum.</title>
        <authorList>
            <person name="Banerjee R."/>
            <person name="Francis S.E."/>
            <person name="Goldberg D.E."/>
        </authorList>
    </citation>
    <scope>DEVELOPMENTAL STAGE</scope>
    <scope>PROTEOLYTIC CLEAVAGE</scope>
</reference>
<reference evidence="22 23" key="6">
    <citation type="journal article" date="2011" name="Biochemistry">
        <title>Structural insights into the activation and inhibition of histo-aspartic protease from Plasmodium falciparum.</title>
        <authorList>
            <person name="Bhaumik P."/>
            <person name="Xiao H."/>
            <person name="Hidaka K."/>
            <person name="Gustchina A."/>
            <person name="Kiso Y."/>
            <person name="Yada R.Y."/>
            <person name="Wlodawer A."/>
        </authorList>
    </citation>
    <scope>X-RAY CRYSTALLOGRAPHY (2.10 ANGSTROMS) IN APO FORM AND IN COMPLEX WITH INHIBITOR</scope>
    <scope>DISULFIDE BONDS</scope>
</reference>
<reference evidence="24 25 26" key="7">
    <citation type="journal article" date="2021" name="FEBS J.">
        <title>Activation mechanism of plasmepsins, pepsin-like aspartic proteases from Plasmodium, follows a unique trans-activation pathway.</title>
        <authorList>
            <person name="Rathore I."/>
            <person name="Mishra V."/>
            <person name="Patel C."/>
            <person name="Xiao H."/>
            <person name="Gustchina A."/>
            <person name="Wlodawer A."/>
            <person name="Yada R.Y."/>
            <person name="Bhaumik P."/>
        </authorList>
    </citation>
    <scope>X-RAY CRYSTALLOGRAPHY (2.00 ANGSTROMS) OF 77-451</scope>
    <scope>SUBUNIT</scope>
    <scope>PROTEOLYTIC CLEAVAGE</scope>
    <scope>DISULFIDE BONDS</scope>
</reference>
<protein>
    <recommendedName>
        <fullName evidence="12">Plasmepsin III</fullName>
        <ecNumber evidence="7">3.4.23.39</ecNumber>
    </recommendedName>
    <alternativeName>
        <fullName evidence="11">Histo-aspartic protease</fullName>
    </alternativeName>
    <alternativeName>
        <fullName evidence="12">Plasmepsin 3</fullName>
    </alternativeName>
</protein>
<name>PLM3_PLAFX</name>